<sequence>MNIQALLSDKVSQALIAAGAPADCEAQVRQSAKAQFGDYQANGVMAVAKKLGMQPRQLAERVVELLDLTGIASKIEIAGPGFINIFLDRQWVAEKVEYALTAPKLGVAPVEPQTIVVDYSAPNVAKQMHVGHLRSTIIGDAAVRTLAFLGHNVIRANHVGDWGTQFGMLIAYLEKMQNENASDMGLSDLELFYQQAKKTYDEDEEFALRARAYVVKLQSGDEYCRQMWRKLVDITMAQNQVAYDRLNVTLTKDDVMGESLYNAMLPEIVADLKAKGLAVESEGATVVYLDEYKNKDGEPMGVIIQKKDGGYLYTTTDIACAKYRYETLGADRILYYIDSRQHQHLMQAWTIVRKAGYVPESVPLEHHMFGMMLGKDGKPFKTRSGGTVKLSDLLDEAVERAGKLIAEKNPDMPADELKQVINAVGIGAVKYADLSKSRTTDYIFDWDNMLALDGNTAPYMQYAYTRVVSVFRRAGVDETSLTLPLVITEDREAALATRLLQFEEIITTVAREGTPHVMCSYLYDVAGLFSSFYEHCQILNAESEEIRQSRLKLAMLTAKTLKQGLDTLGIQTVERM</sequence>
<accession>B2K312</accession>
<name>SYR_YERPB</name>
<organism>
    <name type="scientific">Yersinia pseudotuberculosis serotype IB (strain PB1/+)</name>
    <dbReference type="NCBI Taxonomy" id="502801"/>
    <lineage>
        <taxon>Bacteria</taxon>
        <taxon>Pseudomonadati</taxon>
        <taxon>Pseudomonadota</taxon>
        <taxon>Gammaproteobacteria</taxon>
        <taxon>Enterobacterales</taxon>
        <taxon>Yersiniaceae</taxon>
        <taxon>Yersinia</taxon>
    </lineage>
</organism>
<protein>
    <recommendedName>
        <fullName evidence="1">Arginine--tRNA ligase</fullName>
        <ecNumber evidence="1">6.1.1.19</ecNumber>
    </recommendedName>
    <alternativeName>
        <fullName evidence="1">Arginyl-tRNA synthetase</fullName>
        <shortName evidence="1">ArgRS</shortName>
    </alternativeName>
</protein>
<proteinExistence type="inferred from homology"/>
<keyword id="KW-0030">Aminoacyl-tRNA synthetase</keyword>
<keyword id="KW-0067">ATP-binding</keyword>
<keyword id="KW-0963">Cytoplasm</keyword>
<keyword id="KW-0436">Ligase</keyword>
<keyword id="KW-0547">Nucleotide-binding</keyword>
<keyword id="KW-0648">Protein biosynthesis</keyword>
<dbReference type="EC" id="6.1.1.19" evidence="1"/>
<dbReference type="EMBL" id="CP001048">
    <property type="protein sequence ID" value="ACC89051.1"/>
    <property type="molecule type" value="Genomic_DNA"/>
</dbReference>
<dbReference type="RefSeq" id="WP_012413716.1">
    <property type="nucleotide sequence ID" value="NZ_CP009780.1"/>
</dbReference>
<dbReference type="SMR" id="B2K312"/>
<dbReference type="GeneID" id="49785981"/>
<dbReference type="KEGG" id="ypb:YPTS_2088"/>
<dbReference type="PATRIC" id="fig|502801.10.peg.1477"/>
<dbReference type="GO" id="GO:0005737">
    <property type="term" value="C:cytoplasm"/>
    <property type="evidence" value="ECO:0007669"/>
    <property type="project" value="UniProtKB-SubCell"/>
</dbReference>
<dbReference type="GO" id="GO:0004814">
    <property type="term" value="F:arginine-tRNA ligase activity"/>
    <property type="evidence" value="ECO:0007669"/>
    <property type="project" value="UniProtKB-UniRule"/>
</dbReference>
<dbReference type="GO" id="GO:0005524">
    <property type="term" value="F:ATP binding"/>
    <property type="evidence" value="ECO:0007669"/>
    <property type="project" value="UniProtKB-UniRule"/>
</dbReference>
<dbReference type="GO" id="GO:0006420">
    <property type="term" value="P:arginyl-tRNA aminoacylation"/>
    <property type="evidence" value="ECO:0007669"/>
    <property type="project" value="UniProtKB-UniRule"/>
</dbReference>
<dbReference type="CDD" id="cd07956">
    <property type="entry name" value="Anticodon_Ia_Arg"/>
    <property type="match status" value="1"/>
</dbReference>
<dbReference type="CDD" id="cd00671">
    <property type="entry name" value="ArgRS_core"/>
    <property type="match status" value="1"/>
</dbReference>
<dbReference type="FunFam" id="1.10.730.10:FF:000001">
    <property type="entry name" value="Arginine--tRNA ligase"/>
    <property type="match status" value="1"/>
</dbReference>
<dbReference type="FunFam" id="3.30.1360.70:FF:000001">
    <property type="entry name" value="Arginine--tRNA ligase"/>
    <property type="match status" value="1"/>
</dbReference>
<dbReference type="FunFam" id="3.40.50.620:FF:000030">
    <property type="entry name" value="Arginine--tRNA ligase"/>
    <property type="match status" value="1"/>
</dbReference>
<dbReference type="Gene3D" id="3.30.1360.70">
    <property type="entry name" value="Arginyl tRNA synthetase N-terminal domain"/>
    <property type="match status" value="1"/>
</dbReference>
<dbReference type="Gene3D" id="3.40.50.620">
    <property type="entry name" value="HUPs"/>
    <property type="match status" value="1"/>
</dbReference>
<dbReference type="Gene3D" id="1.10.730.10">
    <property type="entry name" value="Isoleucyl-tRNA Synthetase, Domain 1"/>
    <property type="match status" value="1"/>
</dbReference>
<dbReference type="HAMAP" id="MF_00123">
    <property type="entry name" value="Arg_tRNA_synth"/>
    <property type="match status" value="1"/>
</dbReference>
<dbReference type="InterPro" id="IPR001412">
    <property type="entry name" value="aa-tRNA-synth_I_CS"/>
</dbReference>
<dbReference type="InterPro" id="IPR001278">
    <property type="entry name" value="Arg-tRNA-ligase"/>
</dbReference>
<dbReference type="InterPro" id="IPR005148">
    <property type="entry name" value="Arg-tRNA-synth_N"/>
</dbReference>
<dbReference type="InterPro" id="IPR036695">
    <property type="entry name" value="Arg-tRNA-synth_N_sf"/>
</dbReference>
<dbReference type="InterPro" id="IPR035684">
    <property type="entry name" value="ArgRS_core"/>
</dbReference>
<dbReference type="InterPro" id="IPR008909">
    <property type="entry name" value="DALR_anticod-bd"/>
</dbReference>
<dbReference type="InterPro" id="IPR014729">
    <property type="entry name" value="Rossmann-like_a/b/a_fold"/>
</dbReference>
<dbReference type="InterPro" id="IPR009080">
    <property type="entry name" value="tRNAsynth_Ia_anticodon-bd"/>
</dbReference>
<dbReference type="NCBIfam" id="TIGR00456">
    <property type="entry name" value="argS"/>
    <property type="match status" value="1"/>
</dbReference>
<dbReference type="PANTHER" id="PTHR11956:SF5">
    <property type="entry name" value="ARGININE--TRNA LIGASE, CYTOPLASMIC"/>
    <property type="match status" value="1"/>
</dbReference>
<dbReference type="PANTHER" id="PTHR11956">
    <property type="entry name" value="ARGINYL-TRNA SYNTHETASE"/>
    <property type="match status" value="1"/>
</dbReference>
<dbReference type="Pfam" id="PF03485">
    <property type="entry name" value="Arg_tRNA_synt_N"/>
    <property type="match status" value="1"/>
</dbReference>
<dbReference type="Pfam" id="PF05746">
    <property type="entry name" value="DALR_1"/>
    <property type="match status" value="1"/>
</dbReference>
<dbReference type="Pfam" id="PF00750">
    <property type="entry name" value="tRNA-synt_1d"/>
    <property type="match status" value="1"/>
</dbReference>
<dbReference type="PRINTS" id="PR01038">
    <property type="entry name" value="TRNASYNTHARG"/>
</dbReference>
<dbReference type="SMART" id="SM01016">
    <property type="entry name" value="Arg_tRNA_synt_N"/>
    <property type="match status" value="1"/>
</dbReference>
<dbReference type="SMART" id="SM00836">
    <property type="entry name" value="DALR_1"/>
    <property type="match status" value="1"/>
</dbReference>
<dbReference type="SUPFAM" id="SSF47323">
    <property type="entry name" value="Anticodon-binding domain of a subclass of class I aminoacyl-tRNA synthetases"/>
    <property type="match status" value="1"/>
</dbReference>
<dbReference type="SUPFAM" id="SSF55190">
    <property type="entry name" value="Arginyl-tRNA synthetase (ArgRS), N-terminal 'additional' domain"/>
    <property type="match status" value="1"/>
</dbReference>
<dbReference type="SUPFAM" id="SSF52374">
    <property type="entry name" value="Nucleotidylyl transferase"/>
    <property type="match status" value="1"/>
</dbReference>
<dbReference type="PROSITE" id="PS00178">
    <property type="entry name" value="AA_TRNA_LIGASE_I"/>
    <property type="match status" value="1"/>
</dbReference>
<gene>
    <name evidence="1" type="primary">argS</name>
    <name type="ordered locus">YPTS_2088</name>
</gene>
<evidence type="ECO:0000255" key="1">
    <source>
        <dbReference type="HAMAP-Rule" id="MF_00123"/>
    </source>
</evidence>
<reference key="1">
    <citation type="submission" date="2008-04" db="EMBL/GenBank/DDBJ databases">
        <title>Complete sequence of Yersinia pseudotuberculosis PB1/+.</title>
        <authorList>
            <person name="Copeland A."/>
            <person name="Lucas S."/>
            <person name="Lapidus A."/>
            <person name="Glavina del Rio T."/>
            <person name="Dalin E."/>
            <person name="Tice H."/>
            <person name="Bruce D."/>
            <person name="Goodwin L."/>
            <person name="Pitluck S."/>
            <person name="Munk A.C."/>
            <person name="Brettin T."/>
            <person name="Detter J.C."/>
            <person name="Han C."/>
            <person name="Tapia R."/>
            <person name="Schmutz J."/>
            <person name="Larimer F."/>
            <person name="Land M."/>
            <person name="Hauser L."/>
            <person name="Challacombe J.F."/>
            <person name="Green L."/>
            <person name="Lindler L.E."/>
            <person name="Nikolich M.P."/>
            <person name="Richardson P."/>
        </authorList>
    </citation>
    <scope>NUCLEOTIDE SEQUENCE [LARGE SCALE GENOMIC DNA]</scope>
    <source>
        <strain>PB1/+</strain>
    </source>
</reference>
<feature type="chain" id="PRO_1000095425" description="Arginine--tRNA ligase">
    <location>
        <begin position="1"/>
        <end position="576"/>
    </location>
</feature>
<feature type="short sequence motif" description="'HIGH' region">
    <location>
        <begin position="122"/>
        <end position="132"/>
    </location>
</feature>
<comment type="catalytic activity">
    <reaction evidence="1">
        <text>tRNA(Arg) + L-arginine + ATP = L-arginyl-tRNA(Arg) + AMP + diphosphate</text>
        <dbReference type="Rhea" id="RHEA:20301"/>
        <dbReference type="Rhea" id="RHEA-COMP:9658"/>
        <dbReference type="Rhea" id="RHEA-COMP:9673"/>
        <dbReference type="ChEBI" id="CHEBI:30616"/>
        <dbReference type="ChEBI" id="CHEBI:32682"/>
        <dbReference type="ChEBI" id="CHEBI:33019"/>
        <dbReference type="ChEBI" id="CHEBI:78442"/>
        <dbReference type="ChEBI" id="CHEBI:78513"/>
        <dbReference type="ChEBI" id="CHEBI:456215"/>
        <dbReference type="EC" id="6.1.1.19"/>
    </reaction>
</comment>
<comment type="subunit">
    <text evidence="1">Monomer.</text>
</comment>
<comment type="subcellular location">
    <subcellularLocation>
        <location evidence="1">Cytoplasm</location>
    </subcellularLocation>
</comment>
<comment type="similarity">
    <text evidence="1">Belongs to the class-I aminoacyl-tRNA synthetase family.</text>
</comment>